<keyword id="KW-1185">Reference proteome</keyword>
<keyword id="KW-0687">Ribonucleoprotein</keyword>
<keyword id="KW-0689">Ribosomal protein</keyword>
<keyword id="KW-0694">RNA-binding</keyword>
<keyword id="KW-0699">rRNA-binding</keyword>
<organism>
    <name type="scientific">Syntrophus aciditrophicus (strain SB)</name>
    <dbReference type="NCBI Taxonomy" id="56780"/>
    <lineage>
        <taxon>Bacteria</taxon>
        <taxon>Pseudomonadati</taxon>
        <taxon>Thermodesulfobacteriota</taxon>
        <taxon>Syntrophia</taxon>
        <taxon>Syntrophales</taxon>
        <taxon>Syntrophaceae</taxon>
        <taxon>Syntrophus</taxon>
    </lineage>
</organism>
<proteinExistence type="inferred from homology"/>
<accession>Q2LQ98</accession>
<reference key="1">
    <citation type="journal article" date="2007" name="Proc. Natl. Acad. Sci. U.S.A.">
        <title>The genome of Syntrophus aciditrophicus: life at the thermodynamic limit of microbial growth.</title>
        <authorList>
            <person name="McInerney M.J."/>
            <person name="Rohlin L."/>
            <person name="Mouttaki H."/>
            <person name="Kim U."/>
            <person name="Krupp R.S."/>
            <person name="Rios-Hernandez L."/>
            <person name="Sieber J."/>
            <person name="Struchtemeyer C.G."/>
            <person name="Bhattacharyya A."/>
            <person name="Campbell J.W."/>
            <person name="Gunsalus R.P."/>
        </authorList>
    </citation>
    <scope>NUCLEOTIDE SEQUENCE [LARGE SCALE GENOMIC DNA]</scope>
    <source>
        <strain>SB</strain>
    </source>
</reference>
<dbReference type="EMBL" id="CP000252">
    <property type="protein sequence ID" value="ABC76183.1"/>
    <property type="molecule type" value="Genomic_DNA"/>
</dbReference>
<dbReference type="RefSeq" id="WP_011416217.1">
    <property type="nucleotide sequence ID" value="NC_007759.1"/>
</dbReference>
<dbReference type="SMR" id="Q2LQ98"/>
<dbReference type="FunCoup" id="Q2LQ98">
    <property type="interactions" value="663"/>
</dbReference>
<dbReference type="STRING" id="56780.SYN_00988"/>
<dbReference type="KEGG" id="sat:SYN_00988"/>
<dbReference type="eggNOG" id="COG0090">
    <property type="taxonomic scope" value="Bacteria"/>
</dbReference>
<dbReference type="HOGENOM" id="CLU_036235_2_1_7"/>
<dbReference type="InParanoid" id="Q2LQ98"/>
<dbReference type="OrthoDB" id="9778722at2"/>
<dbReference type="Proteomes" id="UP000001933">
    <property type="component" value="Chromosome"/>
</dbReference>
<dbReference type="GO" id="GO:0015934">
    <property type="term" value="C:large ribosomal subunit"/>
    <property type="evidence" value="ECO:0007669"/>
    <property type="project" value="InterPro"/>
</dbReference>
<dbReference type="GO" id="GO:0019843">
    <property type="term" value="F:rRNA binding"/>
    <property type="evidence" value="ECO:0007669"/>
    <property type="project" value="UniProtKB-UniRule"/>
</dbReference>
<dbReference type="GO" id="GO:0003735">
    <property type="term" value="F:structural constituent of ribosome"/>
    <property type="evidence" value="ECO:0007669"/>
    <property type="project" value="InterPro"/>
</dbReference>
<dbReference type="GO" id="GO:0016740">
    <property type="term" value="F:transferase activity"/>
    <property type="evidence" value="ECO:0007669"/>
    <property type="project" value="InterPro"/>
</dbReference>
<dbReference type="GO" id="GO:0002181">
    <property type="term" value="P:cytoplasmic translation"/>
    <property type="evidence" value="ECO:0007669"/>
    <property type="project" value="TreeGrafter"/>
</dbReference>
<dbReference type="FunFam" id="2.30.30.30:FF:000001">
    <property type="entry name" value="50S ribosomal protein L2"/>
    <property type="match status" value="1"/>
</dbReference>
<dbReference type="FunFam" id="2.40.50.140:FF:000003">
    <property type="entry name" value="50S ribosomal protein L2"/>
    <property type="match status" value="1"/>
</dbReference>
<dbReference type="FunFam" id="4.10.950.10:FF:000001">
    <property type="entry name" value="50S ribosomal protein L2"/>
    <property type="match status" value="1"/>
</dbReference>
<dbReference type="Gene3D" id="2.30.30.30">
    <property type="match status" value="1"/>
</dbReference>
<dbReference type="Gene3D" id="2.40.50.140">
    <property type="entry name" value="Nucleic acid-binding proteins"/>
    <property type="match status" value="1"/>
</dbReference>
<dbReference type="Gene3D" id="4.10.950.10">
    <property type="entry name" value="Ribosomal protein L2, domain 3"/>
    <property type="match status" value="1"/>
</dbReference>
<dbReference type="HAMAP" id="MF_01320_B">
    <property type="entry name" value="Ribosomal_uL2_B"/>
    <property type="match status" value="1"/>
</dbReference>
<dbReference type="InterPro" id="IPR012340">
    <property type="entry name" value="NA-bd_OB-fold"/>
</dbReference>
<dbReference type="InterPro" id="IPR014722">
    <property type="entry name" value="Rib_uL2_dom2"/>
</dbReference>
<dbReference type="InterPro" id="IPR002171">
    <property type="entry name" value="Ribosomal_uL2"/>
</dbReference>
<dbReference type="InterPro" id="IPR005880">
    <property type="entry name" value="Ribosomal_uL2_bac/org-type"/>
</dbReference>
<dbReference type="InterPro" id="IPR022669">
    <property type="entry name" value="Ribosomal_uL2_C"/>
</dbReference>
<dbReference type="InterPro" id="IPR022671">
    <property type="entry name" value="Ribosomal_uL2_CS"/>
</dbReference>
<dbReference type="InterPro" id="IPR014726">
    <property type="entry name" value="Ribosomal_uL2_dom3"/>
</dbReference>
<dbReference type="InterPro" id="IPR022666">
    <property type="entry name" value="Ribosomal_uL2_RNA-bd_dom"/>
</dbReference>
<dbReference type="InterPro" id="IPR008991">
    <property type="entry name" value="Translation_prot_SH3-like_sf"/>
</dbReference>
<dbReference type="NCBIfam" id="TIGR01171">
    <property type="entry name" value="rplB_bact"/>
    <property type="match status" value="1"/>
</dbReference>
<dbReference type="PANTHER" id="PTHR13691:SF5">
    <property type="entry name" value="LARGE RIBOSOMAL SUBUNIT PROTEIN UL2M"/>
    <property type="match status" value="1"/>
</dbReference>
<dbReference type="PANTHER" id="PTHR13691">
    <property type="entry name" value="RIBOSOMAL PROTEIN L2"/>
    <property type="match status" value="1"/>
</dbReference>
<dbReference type="Pfam" id="PF00181">
    <property type="entry name" value="Ribosomal_L2"/>
    <property type="match status" value="1"/>
</dbReference>
<dbReference type="Pfam" id="PF03947">
    <property type="entry name" value="Ribosomal_L2_C"/>
    <property type="match status" value="1"/>
</dbReference>
<dbReference type="PIRSF" id="PIRSF002158">
    <property type="entry name" value="Ribosomal_L2"/>
    <property type="match status" value="1"/>
</dbReference>
<dbReference type="SMART" id="SM01383">
    <property type="entry name" value="Ribosomal_L2"/>
    <property type="match status" value="1"/>
</dbReference>
<dbReference type="SMART" id="SM01382">
    <property type="entry name" value="Ribosomal_L2_C"/>
    <property type="match status" value="1"/>
</dbReference>
<dbReference type="SUPFAM" id="SSF50249">
    <property type="entry name" value="Nucleic acid-binding proteins"/>
    <property type="match status" value="1"/>
</dbReference>
<dbReference type="SUPFAM" id="SSF50104">
    <property type="entry name" value="Translation proteins SH3-like domain"/>
    <property type="match status" value="1"/>
</dbReference>
<dbReference type="PROSITE" id="PS00467">
    <property type="entry name" value="RIBOSOMAL_L2"/>
    <property type="match status" value="1"/>
</dbReference>
<evidence type="ECO:0000255" key="1">
    <source>
        <dbReference type="HAMAP-Rule" id="MF_01320"/>
    </source>
</evidence>
<evidence type="ECO:0000256" key="2">
    <source>
        <dbReference type="SAM" id="MobiDB-lite"/>
    </source>
</evidence>
<evidence type="ECO:0000305" key="3"/>
<sequence length="273" mass="30048">MAIRKYKPTSPGRRYQTCSTFEEVTTDQPQKSLLGTIKKTGGRNNFGRITSRHVGGGHKRRYRFIDFKREKLDVPGKIASIEYDPNRSARIALVSYEDGEKRYIIAPAKVAVGEKIVSGERADIKAGNAMPLRNIPVGSLIHNIELKVGKGGQLIRSAGTYGQLMAKEGSYAQVRLPSGEMRKIFIDCRATIGQVGNNEHENISVGKAGRTRWAGKRPKVRGVVMNPVDHPMGGGEGRSSGGRHPCTPWGVPTKGHKTRSNKSTDKYIVKRRG</sequence>
<comment type="function">
    <text evidence="1">One of the primary rRNA binding proteins. Required for association of the 30S and 50S subunits to form the 70S ribosome, for tRNA binding and peptide bond formation. It has been suggested to have peptidyltransferase activity; this is somewhat controversial. Makes several contacts with the 16S rRNA in the 70S ribosome.</text>
</comment>
<comment type="subunit">
    <text evidence="1">Part of the 50S ribosomal subunit. Forms a bridge to the 30S subunit in the 70S ribosome.</text>
</comment>
<comment type="similarity">
    <text evidence="1">Belongs to the universal ribosomal protein uL2 family.</text>
</comment>
<feature type="chain" id="PRO_0000237257" description="Large ribosomal subunit protein uL2">
    <location>
        <begin position="1"/>
        <end position="273"/>
    </location>
</feature>
<feature type="region of interest" description="Disordered" evidence="2">
    <location>
        <begin position="223"/>
        <end position="273"/>
    </location>
</feature>
<feature type="compositionally biased region" description="Basic and acidic residues" evidence="2">
    <location>
        <begin position="262"/>
        <end position="273"/>
    </location>
</feature>
<gene>
    <name evidence="1" type="primary">rplB</name>
    <name type="ordered locus">SYNAS_03040</name>
    <name type="ORF">SYN_00988</name>
</gene>
<name>RL2_SYNAS</name>
<protein>
    <recommendedName>
        <fullName evidence="1">Large ribosomal subunit protein uL2</fullName>
    </recommendedName>
    <alternativeName>
        <fullName evidence="3">50S ribosomal protein L2</fullName>
    </alternativeName>
</protein>